<keyword id="KW-0028">Amino-acid biosynthesis</keyword>
<keyword id="KW-0067">ATP-binding</keyword>
<keyword id="KW-0963">Cytoplasm</keyword>
<keyword id="KW-0328">Glycosyltransferase</keyword>
<keyword id="KW-0368">Histidine biosynthesis</keyword>
<keyword id="KW-0547">Nucleotide-binding</keyword>
<keyword id="KW-0808">Transferase</keyword>
<protein>
    <recommendedName>
        <fullName evidence="1">ATP phosphoribosyltransferase</fullName>
        <shortName evidence="1">ATP-PRT</shortName>
        <shortName evidence="1">ATP-PRTase</shortName>
        <ecNumber evidence="1">2.4.2.17</ecNumber>
    </recommendedName>
</protein>
<comment type="function">
    <text evidence="1">Catalyzes the condensation of ATP and 5-phosphoribose 1-diphosphate to form N'-(5'-phosphoribosyl)-ATP (PR-ATP). Has a crucial role in the pathway because the rate of histidine biosynthesis seems to be controlled primarily by regulation of HisG enzymatic activity.</text>
</comment>
<comment type="catalytic activity">
    <reaction evidence="1">
        <text>1-(5-phospho-beta-D-ribosyl)-ATP + diphosphate = 5-phospho-alpha-D-ribose 1-diphosphate + ATP</text>
        <dbReference type="Rhea" id="RHEA:18473"/>
        <dbReference type="ChEBI" id="CHEBI:30616"/>
        <dbReference type="ChEBI" id="CHEBI:33019"/>
        <dbReference type="ChEBI" id="CHEBI:58017"/>
        <dbReference type="ChEBI" id="CHEBI:73183"/>
        <dbReference type="EC" id="2.4.2.17"/>
    </reaction>
</comment>
<comment type="pathway">
    <text evidence="1">Amino-acid biosynthesis; L-histidine biosynthesis; L-histidine from 5-phospho-alpha-D-ribose 1-diphosphate: step 1/9.</text>
</comment>
<comment type="subunit">
    <text evidence="1">Heteromultimer composed of HisG and HisZ subunits.</text>
</comment>
<comment type="subcellular location">
    <subcellularLocation>
        <location evidence="1">Cytoplasm</location>
    </subcellularLocation>
</comment>
<comment type="domain">
    <text>Lacks the C-terminal regulatory region which is replaced by HisZ.</text>
</comment>
<comment type="similarity">
    <text evidence="1">Belongs to the ATP phosphoribosyltransferase family. Short subfamily.</text>
</comment>
<sequence>MRNIQIALTKGRLEKHVIPLFEQIGIDCSELKNKGRKLVFQSKNTDISFILVKAVDVATYVEHGVADIGVVGKDILMENEKDIYEMLDLGVGVCKFCVASIPTYNPKSYRKKCIATKYPHITSNYFHDKGEDVEIIKIEGSVEIAPILGLADAIVDIVETGKTLQENGLIVFEEMYSISARMIVNKAALKTKKDEIFSIINMMEQEILSGK</sequence>
<evidence type="ECO:0000255" key="1">
    <source>
        <dbReference type="HAMAP-Rule" id="MF_01018"/>
    </source>
</evidence>
<proteinExistence type="inferred from homology"/>
<organism>
    <name type="scientific">Bacillus cereus (strain Q1)</name>
    <dbReference type="NCBI Taxonomy" id="361100"/>
    <lineage>
        <taxon>Bacteria</taxon>
        <taxon>Bacillati</taxon>
        <taxon>Bacillota</taxon>
        <taxon>Bacilli</taxon>
        <taxon>Bacillales</taxon>
        <taxon>Bacillaceae</taxon>
        <taxon>Bacillus</taxon>
        <taxon>Bacillus cereus group</taxon>
    </lineage>
</organism>
<accession>B9IUZ5</accession>
<feature type="chain" id="PRO_1000213255" description="ATP phosphoribosyltransferase">
    <location>
        <begin position="1"/>
        <end position="211"/>
    </location>
</feature>
<name>HIS1_BACCQ</name>
<dbReference type="EC" id="2.4.2.17" evidence="1"/>
<dbReference type="EMBL" id="CP000227">
    <property type="protein sequence ID" value="ACM11906.1"/>
    <property type="molecule type" value="Genomic_DNA"/>
</dbReference>
<dbReference type="SMR" id="B9IUZ5"/>
<dbReference type="KEGG" id="bcq:BCQ_1478"/>
<dbReference type="HOGENOM" id="CLU_038115_2_0_9"/>
<dbReference type="UniPathway" id="UPA00031">
    <property type="reaction ID" value="UER00006"/>
</dbReference>
<dbReference type="Proteomes" id="UP000000441">
    <property type="component" value="Chromosome"/>
</dbReference>
<dbReference type="GO" id="GO:0005737">
    <property type="term" value="C:cytoplasm"/>
    <property type="evidence" value="ECO:0007669"/>
    <property type="project" value="UniProtKB-SubCell"/>
</dbReference>
<dbReference type="GO" id="GO:0005524">
    <property type="term" value="F:ATP binding"/>
    <property type="evidence" value="ECO:0007669"/>
    <property type="project" value="UniProtKB-KW"/>
</dbReference>
<dbReference type="GO" id="GO:0003879">
    <property type="term" value="F:ATP phosphoribosyltransferase activity"/>
    <property type="evidence" value="ECO:0007669"/>
    <property type="project" value="UniProtKB-UniRule"/>
</dbReference>
<dbReference type="GO" id="GO:0000105">
    <property type="term" value="P:L-histidine biosynthetic process"/>
    <property type="evidence" value="ECO:0007669"/>
    <property type="project" value="UniProtKB-UniRule"/>
</dbReference>
<dbReference type="CDD" id="cd13595">
    <property type="entry name" value="PBP2_HisGs"/>
    <property type="match status" value="1"/>
</dbReference>
<dbReference type="FunFam" id="3.40.190.10:FF:000011">
    <property type="entry name" value="ATP phosphoribosyltransferase"/>
    <property type="match status" value="1"/>
</dbReference>
<dbReference type="Gene3D" id="3.40.190.10">
    <property type="entry name" value="Periplasmic binding protein-like II"/>
    <property type="match status" value="2"/>
</dbReference>
<dbReference type="HAMAP" id="MF_01018">
    <property type="entry name" value="HisG_Short"/>
    <property type="match status" value="1"/>
</dbReference>
<dbReference type="InterPro" id="IPR013820">
    <property type="entry name" value="ATP_PRibTrfase_cat"/>
</dbReference>
<dbReference type="InterPro" id="IPR018198">
    <property type="entry name" value="ATP_PRibTrfase_CS"/>
</dbReference>
<dbReference type="InterPro" id="IPR001348">
    <property type="entry name" value="ATP_PRibTrfase_HisG"/>
</dbReference>
<dbReference type="InterPro" id="IPR024893">
    <property type="entry name" value="ATP_PRibTrfase_HisG_short"/>
</dbReference>
<dbReference type="NCBIfam" id="TIGR00070">
    <property type="entry name" value="hisG"/>
    <property type="match status" value="1"/>
</dbReference>
<dbReference type="PANTHER" id="PTHR21403:SF8">
    <property type="entry name" value="ATP PHOSPHORIBOSYLTRANSFERASE"/>
    <property type="match status" value="1"/>
</dbReference>
<dbReference type="PANTHER" id="PTHR21403">
    <property type="entry name" value="ATP PHOSPHORIBOSYLTRANSFERASE ATP-PRTASE"/>
    <property type="match status" value="1"/>
</dbReference>
<dbReference type="Pfam" id="PF01634">
    <property type="entry name" value="HisG"/>
    <property type="match status" value="1"/>
</dbReference>
<dbReference type="SUPFAM" id="SSF53850">
    <property type="entry name" value="Periplasmic binding protein-like II"/>
    <property type="match status" value="1"/>
</dbReference>
<dbReference type="PROSITE" id="PS01316">
    <property type="entry name" value="ATP_P_PHORIBOSYLTR"/>
    <property type="match status" value="1"/>
</dbReference>
<reference key="1">
    <citation type="journal article" date="2009" name="J. Bacteriol.">
        <title>Complete genome sequence of the extremophilic Bacillus cereus strain Q1 with industrial applications.</title>
        <authorList>
            <person name="Xiong Z."/>
            <person name="Jiang Y."/>
            <person name="Qi D."/>
            <person name="Lu H."/>
            <person name="Yang F."/>
            <person name="Yang J."/>
            <person name="Chen L."/>
            <person name="Sun L."/>
            <person name="Xu X."/>
            <person name="Xue Y."/>
            <person name="Zhu Y."/>
            <person name="Jin Q."/>
        </authorList>
    </citation>
    <scope>NUCLEOTIDE SEQUENCE [LARGE SCALE GENOMIC DNA]</scope>
    <source>
        <strain>Q1</strain>
    </source>
</reference>
<gene>
    <name evidence="1" type="primary">hisG</name>
    <name type="ordered locus">BCQ_1478</name>
</gene>